<organism>
    <name type="scientific">Mycolicibacterium vanbaalenii (strain DSM 7251 / JCM 13017 / BCRC 16820 / KCTC 9966 / NRRL B-24157 / PYR-1)</name>
    <name type="common">Mycobacterium vanbaalenii</name>
    <dbReference type="NCBI Taxonomy" id="350058"/>
    <lineage>
        <taxon>Bacteria</taxon>
        <taxon>Bacillati</taxon>
        <taxon>Actinomycetota</taxon>
        <taxon>Actinomycetes</taxon>
        <taxon>Mycobacteriales</taxon>
        <taxon>Mycobacteriaceae</taxon>
        <taxon>Mycolicibacterium</taxon>
    </lineage>
</organism>
<accession>A1TGX4</accession>
<protein>
    <recommendedName>
        <fullName evidence="1">Serine--tRNA ligase</fullName>
        <ecNumber evidence="1">6.1.1.11</ecNumber>
    </recommendedName>
    <alternativeName>
        <fullName evidence="1">Seryl-tRNA synthetase</fullName>
        <shortName evidence="1">SerRS</shortName>
    </alternativeName>
    <alternativeName>
        <fullName evidence="1">Seryl-tRNA(Ser/Sec) synthetase</fullName>
    </alternativeName>
</protein>
<evidence type="ECO:0000255" key="1">
    <source>
        <dbReference type="HAMAP-Rule" id="MF_00176"/>
    </source>
</evidence>
<sequence length="419" mass="45412">MIDLKVLRENPDAVRASQLARGEDPGLVDALADADTARRAAISAADNLRAEQKSASRLVGKASPEERPALLAAAKELADKVRAAESAQAEAEKAYSAAHMAISNVIIDGVPAGGEDDFVVLDTVGEPTALTDPKDHLELGESLGLIDMERGAKVSGSRFYFLTGFGALLQLGLFQLAVRTATENGFTLVIPPVLVRPEIMSGTGFLGAHADEVYRVEADDLYLVGTSEVPLAGYHSGEILDLSEGPKRYAGWSSCFRREAGSYGKDTRGIIRVHQFDKVEGFVYCRPEEAEAEHDRLLGWQRQMLGLIEVPYRVIDIAAGDLGSSAARKFDCEAWVPTQQTYRELTSTSNCTTFQARRLGVRYRDENGKPQTAATLNGTLATTRWLVAILENHQQPDGSVRIPEALVPYVGTEVLTPKN</sequence>
<gene>
    <name evidence="1" type="primary">serS</name>
    <name type="ordered locus">Mvan_5659</name>
</gene>
<dbReference type="EC" id="6.1.1.11" evidence="1"/>
<dbReference type="EMBL" id="CP000511">
    <property type="protein sequence ID" value="ABM16424.1"/>
    <property type="molecule type" value="Genomic_DNA"/>
</dbReference>
<dbReference type="RefSeq" id="WP_011782776.1">
    <property type="nucleotide sequence ID" value="NZ_JACKSD010000095.1"/>
</dbReference>
<dbReference type="SMR" id="A1TGX4"/>
<dbReference type="STRING" id="350058.Mvan_5659"/>
<dbReference type="KEGG" id="mva:Mvan_5659"/>
<dbReference type="eggNOG" id="COG0172">
    <property type="taxonomic scope" value="Bacteria"/>
</dbReference>
<dbReference type="HOGENOM" id="CLU_023797_0_1_11"/>
<dbReference type="UniPathway" id="UPA00906">
    <property type="reaction ID" value="UER00895"/>
</dbReference>
<dbReference type="Proteomes" id="UP000009159">
    <property type="component" value="Chromosome"/>
</dbReference>
<dbReference type="GO" id="GO:0005737">
    <property type="term" value="C:cytoplasm"/>
    <property type="evidence" value="ECO:0007669"/>
    <property type="project" value="UniProtKB-SubCell"/>
</dbReference>
<dbReference type="GO" id="GO:0005524">
    <property type="term" value="F:ATP binding"/>
    <property type="evidence" value="ECO:0007669"/>
    <property type="project" value="UniProtKB-UniRule"/>
</dbReference>
<dbReference type="GO" id="GO:0004828">
    <property type="term" value="F:serine-tRNA ligase activity"/>
    <property type="evidence" value="ECO:0007669"/>
    <property type="project" value="UniProtKB-UniRule"/>
</dbReference>
<dbReference type="GO" id="GO:0016260">
    <property type="term" value="P:selenocysteine biosynthetic process"/>
    <property type="evidence" value="ECO:0007669"/>
    <property type="project" value="UniProtKB-UniRule"/>
</dbReference>
<dbReference type="GO" id="GO:0006434">
    <property type="term" value="P:seryl-tRNA aminoacylation"/>
    <property type="evidence" value="ECO:0007669"/>
    <property type="project" value="UniProtKB-UniRule"/>
</dbReference>
<dbReference type="CDD" id="cd00770">
    <property type="entry name" value="SerRS_core"/>
    <property type="match status" value="1"/>
</dbReference>
<dbReference type="Gene3D" id="3.30.930.10">
    <property type="entry name" value="Bira Bifunctional Protein, Domain 2"/>
    <property type="match status" value="1"/>
</dbReference>
<dbReference type="Gene3D" id="1.10.287.40">
    <property type="entry name" value="Serine-tRNA synthetase, tRNA binding domain"/>
    <property type="match status" value="1"/>
</dbReference>
<dbReference type="HAMAP" id="MF_00176">
    <property type="entry name" value="Ser_tRNA_synth_type1"/>
    <property type="match status" value="1"/>
</dbReference>
<dbReference type="InterPro" id="IPR002314">
    <property type="entry name" value="aa-tRNA-synt_IIb"/>
</dbReference>
<dbReference type="InterPro" id="IPR006195">
    <property type="entry name" value="aa-tRNA-synth_II"/>
</dbReference>
<dbReference type="InterPro" id="IPR045864">
    <property type="entry name" value="aa-tRNA-synth_II/BPL/LPL"/>
</dbReference>
<dbReference type="InterPro" id="IPR002317">
    <property type="entry name" value="Ser-tRNA-ligase_type_1"/>
</dbReference>
<dbReference type="InterPro" id="IPR015866">
    <property type="entry name" value="Ser-tRNA-synth_1_N"/>
</dbReference>
<dbReference type="InterPro" id="IPR042103">
    <property type="entry name" value="SerRS_1_N_sf"/>
</dbReference>
<dbReference type="InterPro" id="IPR033729">
    <property type="entry name" value="SerRS_core"/>
</dbReference>
<dbReference type="InterPro" id="IPR010978">
    <property type="entry name" value="tRNA-bd_arm"/>
</dbReference>
<dbReference type="NCBIfam" id="TIGR00414">
    <property type="entry name" value="serS"/>
    <property type="match status" value="1"/>
</dbReference>
<dbReference type="PANTHER" id="PTHR11778">
    <property type="entry name" value="SERYL-TRNA SYNTHETASE"/>
    <property type="match status" value="1"/>
</dbReference>
<dbReference type="Pfam" id="PF02403">
    <property type="entry name" value="Seryl_tRNA_N"/>
    <property type="match status" value="1"/>
</dbReference>
<dbReference type="Pfam" id="PF00587">
    <property type="entry name" value="tRNA-synt_2b"/>
    <property type="match status" value="1"/>
</dbReference>
<dbReference type="PIRSF" id="PIRSF001529">
    <property type="entry name" value="Ser-tRNA-synth_IIa"/>
    <property type="match status" value="1"/>
</dbReference>
<dbReference type="PRINTS" id="PR00981">
    <property type="entry name" value="TRNASYNTHSER"/>
</dbReference>
<dbReference type="SUPFAM" id="SSF55681">
    <property type="entry name" value="Class II aaRS and biotin synthetases"/>
    <property type="match status" value="1"/>
</dbReference>
<dbReference type="SUPFAM" id="SSF46589">
    <property type="entry name" value="tRNA-binding arm"/>
    <property type="match status" value="1"/>
</dbReference>
<dbReference type="PROSITE" id="PS50862">
    <property type="entry name" value="AA_TRNA_LIGASE_II"/>
    <property type="match status" value="1"/>
</dbReference>
<feature type="chain" id="PRO_1000019744" description="Serine--tRNA ligase">
    <location>
        <begin position="1"/>
        <end position="419"/>
    </location>
</feature>
<feature type="binding site" evidence="1">
    <location>
        <begin position="226"/>
        <end position="228"/>
    </location>
    <ligand>
        <name>L-serine</name>
        <dbReference type="ChEBI" id="CHEBI:33384"/>
    </ligand>
</feature>
<feature type="binding site" evidence="1">
    <location>
        <begin position="257"/>
        <end position="259"/>
    </location>
    <ligand>
        <name>ATP</name>
        <dbReference type="ChEBI" id="CHEBI:30616"/>
    </ligand>
</feature>
<feature type="binding site" evidence="1">
    <location>
        <position position="273"/>
    </location>
    <ligand>
        <name>ATP</name>
        <dbReference type="ChEBI" id="CHEBI:30616"/>
    </ligand>
</feature>
<feature type="binding site" evidence="1">
    <location>
        <position position="280"/>
    </location>
    <ligand>
        <name>L-serine</name>
        <dbReference type="ChEBI" id="CHEBI:33384"/>
    </ligand>
</feature>
<feature type="binding site" evidence="1">
    <location>
        <begin position="344"/>
        <end position="347"/>
    </location>
    <ligand>
        <name>ATP</name>
        <dbReference type="ChEBI" id="CHEBI:30616"/>
    </ligand>
</feature>
<feature type="binding site" evidence="1">
    <location>
        <position position="379"/>
    </location>
    <ligand>
        <name>L-serine</name>
        <dbReference type="ChEBI" id="CHEBI:33384"/>
    </ligand>
</feature>
<proteinExistence type="inferred from homology"/>
<name>SYS_MYCVP</name>
<reference key="1">
    <citation type="submission" date="2006-12" db="EMBL/GenBank/DDBJ databases">
        <title>Complete sequence of Mycobacterium vanbaalenii PYR-1.</title>
        <authorList>
            <consortium name="US DOE Joint Genome Institute"/>
            <person name="Copeland A."/>
            <person name="Lucas S."/>
            <person name="Lapidus A."/>
            <person name="Barry K."/>
            <person name="Detter J.C."/>
            <person name="Glavina del Rio T."/>
            <person name="Hammon N."/>
            <person name="Israni S."/>
            <person name="Dalin E."/>
            <person name="Tice H."/>
            <person name="Pitluck S."/>
            <person name="Singan V."/>
            <person name="Schmutz J."/>
            <person name="Larimer F."/>
            <person name="Land M."/>
            <person name="Hauser L."/>
            <person name="Kyrpides N."/>
            <person name="Anderson I.J."/>
            <person name="Miller C."/>
            <person name="Richardson P."/>
        </authorList>
    </citation>
    <scope>NUCLEOTIDE SEQUENCE [LARGE SCALE GENOMIC DNA]</scope>
    <source>
        <strain>DSM 7251 / JCM 13017 / BCRC 16820 / KCTC 9966 / NRRL B-24157 / PYR-1</strain>
    </source>
</reference>
<keyword id="KW-0030">Aminoacyl-tRNA synthetase</keyword>
<keyword id="KW-0067">ATP-binding</keyword>
<keyword id="KW-0963">Cytoplasm</keyword>
<keyword id="KW-0436">Ligase</keyword>
<keyword id="KW-0547">Nucleotide-binding</keyword>
<keyword id="KW-0648">Protein biosynthesis</keyword>
<comment type="function">
    <text evidence="1">Catalyzes the attachment of serine to tRNA(Ser). Is also able to aminoacylate tRNA(Sec) with serine, to form the misacylated tRNA L-seryl-tRNA(Sec), which will be further converted into selenocysteinyl-tRNA(Sec).</text>
</comment>
<comment type="catalytic activity">
    <reaction evidence="1">
        <text>tRNA(Ser) + L-serine + ATP = L-seryl-tRNA(Ser) + AMP + diphosphate + H(+)</text>
        <dbReference type="Rhea" id="RHEA:12292"/>
        <dbReference type="Rhea" id="RHEA-COMP:9669"/>
        <dbReference type="Rhea" id="RHEA-COMP:9703"/>
        <dbReference type="ChEBI" id="CHEBI:15378"/>
        <dbReference type="ChEBI" id="CHEBI:30616"/>
        <dbReference type="ChEBI" id="CHEBI:33019"/>
        <dbReference type="ChEBI" id="CHEBI:33384"/>
        <dbReference type="ChEBI" id="CHEBI:78442"/>
        <dbReference type="ChEBI" id="CHEBI:78533"/>
        <dbReference type="ChEBI" id="CHEBI:456215"/>
        <dbReference type="EC" id="6.1.1.11"/>
    </reaction>
</comment>
<comment type="catalytic activity">
    <reaction evidence="1">
        <text>tRNA(Sec) + L-serine + ATP = L-seryl-tRNA(Sec) + AMP + diphosphate + H(+)</text>
        <dbReference type="Rhea" id="RHEA:42580"/>
        <dbReference type="Rhea" id="RHEA-COMP:9742"/>
        <dbReference type="Rhea" id="RHEA-COMP:10128"/>
        <dbReference type="ChEBI" id="CHEBI:15378"/>
        <dbReference type="ChEBI" id="CHEBI:30616"/>
        <dbReference type="ChEBI" id="CHEBI:33019"/>
        <dbReference type="ChEBI" id="CHEBI:33384"/>
        <dbReference type="ChEBI" id="CHEBI:78442"/>
        <dbReference type="ChEBI" id="CHEBI:78533"/>
        <dbReference type="ChEBI" id="CHEBI:456215"/>
        <dbReference type="EC" id="6.1.1.11"/>
    </reaction>
</comment>
<comment type="pathway">
    <text evidence="1">Aminoacyl-tRNA biosynthesis; selenocysteinyl-tRNA(Sec) biosynthesis; L-seryl-tRNA(Sec) from L-serine and tRNA(Sec): step 1/1.</text>
</comment>
<comment type="subunit">
    <text evidence="1">Homodimer. The tRNA molecule binds across the dimer.</text>
</comment>
<comment type="subcellular location">
    <subcellularLocation>
        <location evidence="1">Cytoplasm</location>
    </subcellularLocation>
</comment>
<comment type="domain">
    <text evidence="1">Consists of two distinct domains, a catalytic core and a N-terminal extension that is involved in tRNA binding.</text>
</comment>
<comment type="similarity">
    <text evidence="1">Belongs to the class-II aminoacyl-tRNA synthetase family. Type-1 seryl-tRNA synthetase subfamily.</text>
</comment>